<name>HEM6_MOUSE</name>
<protein>
    <recommendedName>
        <fullName>Oxygen-dependent coproporphyrinogen-III oxidase, mitochondrial</fullName>
        <shortName>COX</shortName>
        <shortName>Coprogen oxidase</shortName>
        <shortName>Coproporphyrinogenase</shortName>
        <ecNumber evidence="7">1.3.3.3</ecNumber>
    </recommendedName>
</protein>
<reference key="1">
    <citation type="journal article" date="1993" name="J. Biol. Chem.">
        <title>Coproporphyrinogen oxidase. Purification, molecular cloning, and induction of mRNA during erythroid differentiation.</title>
        <authorList>
            <person name="Kohno H."/>
            <person name="Furukawa T."/>
            <person name="Yoshinaga T."/>
            <person name="Tokunaga R."/>
            <person name="Taketani S."/>
        </authorList>
    </citation>
    <scope>NUCLEOTIDE SEQUENCE [MRNA]</scope>
    <scope>CATALYTIC ACTIVITY</scope>
    <scope>PATHWAY</scope>
    <scope>SUBCELLULAR LOCATION</scope>
    <scope>TISSUE SPECIFICITY</scope>
</reference>
<reference key="2">
    <citation type="journal article" date="2004" name="Genome Res.">
        <title>The status, quality, and expansion of the NIH full-length cDNA project: the Mammalian Gene Collection (MGC).</title>
        <authorList>
            <consortium name="The MGC Project Team"/>
        </authorList>
    </citation>
    <scope>NUCLEOTIDE SEQUENCE [LARGE SCALE MRNA]</scope>
    <source>
        <tissue>Kidney</tissue>
    </source>
</reference>
<reference key="3">
    <citation type="journal article" date="2005" name="Biochem. J.">
        <title>Examination of mitochondrial protein targeting of haem synthetic enzymes: in vivo identification of three functional haem-responsive motifs in 5-aminolaevulinate synthase.</title>
        <authorList>
            <person name="Dailey T.A."/>
            <person name="Woodruff J.H."/>
            <person name="Dailey H.A."/>
        </authorList>
    </citation>
    <scope>NUCLEOTIDE SEQUENCE [GENOMIC DNA] OF 1-139</scope>
</reference>
<reference key="4">
    <citation type="journal article" date="2003" name="Tohoku J. Exp. Med.">
        <title>The long, but not the short, presequence of human coproporphyrinogen oxidase is essential for its import and sorting to mitochondria.</title>
        <authorList>
            <person name="Susa S."/>
            <person name="Daimon M."/>
            <person name="Ono H."/>
            <person name="Li S."/>
            <person name="Yoshida T."/>
            <person name="Kato T."/>
        </authorList>
    </citation>
    <scope>NUCLEOTIDE SEQUENCE [GENOMIC DNA] OF 1-144</scope>
</reference>
<reference key="5">
    <citation type="journal article" date="1994" name="Proc. Natl. Acad. Sci. U.S.A.">
        <title>Molecular cloning, sequencing, and functional expression of a cDNA encoding human coproporphyrinogen oxidase.</title>
        <authorList>
            <person name="Martasek P."/>
            <person name="Camadro J.-M."/>
            <person name="Delfau-Larue M.H."/>
            <person name="Dumas J.B."/>
            <person name="Montagne J.J."/>
            <person name="de Verneuil H."/>
            <person name="Labbe P."/>
            <person name="Grandchamp B."/>
        </authorList>
    </citation>
    <scope>PROTEIN SEQUENCE OF 99-125 AND 248-258</scope>
</reference>
<reference key="6">
    <citation type="journal article" date="2010" name="Cell">
        <title>A tissue-specific atlas of mouse protein phosphorylation and expression.</title>
        <authorList>
            <person name="Huttlin E.L."/>
            <person name="Jedrychowski M.P."/>
            <person name="Elias J.E."/>
            <person name="Goswami T."/>
            <person name="Rad R."/>
            <person name="Beausoleil S.A."/>
            <person name="Villen J."/>
            <person name="Haas W."/>
            <person name="Sowa M.E."/>
            <person name="Gygi S.P."/>
        </authorList>
    </citation>
    <scope>IDENTIFICATION BY MASS SPECTROMETRY [LARGE SCALE ANALYSIS]</scope>
    <source>
        <tissue>Brain</tissue>
        <tissue>Heart</tissue>
        <tissue>Kidney</tissue>
        <tissue>Liver</tissue>
        <tissue>Lung</tissue>
        <tissue>Pancreas</tissue>
        <tissue>Spleen</tissue>
        <tissue>Testis</tissue>
    </source>
</reference>
<reference key="7">
    <citation type="journal article" date="2013" name="Mol. Cell">
        <title>SIRT5-mediated lysine desuccinylation impacts diverse metabolic pathways.</title>
        <authorList>
            <person name="Park J."/>
            <person name="Chen Y."/>
            <person name="Tishkoff D.X."/>
            <person name="Peng C."/>
            <person name="Tan M."/>
            <person name="Dai L."/>
            <person name="Xie Z."/>
            <person name="Zhang Y."/>
            <person name="Zwaans B.M."/>
            <person name="Skinner M.E."/>
            <person name="Lombard D.B."/>
            <person name="Zhao Y."/>
        </authorList>
    </citation>
    <scope>SUCCINYLATION [LARGE SCALE ANALYSIS] AT LYS-393</scope>
    <scope>IDENTIFICATION BY MASS SPECTROMETRY [LARGE SCALE ANALYSIS]</scope>
    <source>
        <tissue>Liver</tissue>
    </source>
</reference>
<reference key="8">
    <citation type="journal article" date="2013" name="Proc. Natl. Acad. Sci. U.S.A.">
        <title>Label-free quantitative proteomics of the lysine acetylome in mitochondria identifies substrates of SIRT3 in metabolic pathways.</title>
        <authorList>
            <person name="Rardin M.J."/>
            <person name="Newman J.C."/>
            <person name="Held J.M."/>
            <person name="Cusack M.P."/>
            <person name="Sorensen D.J."/>
            <person name="Li B."/>
            <person name="Schilling B."/>
            <person name="Mooney S.D."/>
            <person name="Kahn C.R."/>
            <person name="Verdin E."/>
            <person name="Gibson B.W."/>
        </authorList>
    </citation>
    <scope>ACETYLATION [LARGE SCALE ANALYSIS] AT LYS-393</scope>
    <scope>IDENTIFICATION BY MASS SPECTROMETRY [LARGE SCALE ANALYSIS]</scope>
    <source>
        <tissue>Liver</tissue>
    </source>
</reference>
<gene>
    <name type="primary">Cpox</name>
    <name type="synonym">Cpo</name>
</gene>
<proteinExistence type="evidence at protein level"/>
<feature type="transit peptide" description="Mitochondrion" evidence="4">
    <location>
        <begin position="1"/>
        <end position="98"/>
    </location>
</feature>
<feature type="chain" id="PRO_0000006030" description="Oxygen-dependent coproporphyrinogen-III oxidase, mitochondrial">
    <location>
        <begin position="99"/>
        <end position="443"/>
    </location>
</feature>
<feature type="region of interest" description="Disordered" evidence="3">
    <location>
        <begin position="89"/>
        <end position="112"/>
    </location>
</feature>
<feature type="region of interest" description="Important for dimerization" evidence="1">
    <location>
        <begin position="182"/>
        <end position="191"/>
    </location>
</feature>
<feature type="region of interest" description="Important for dimerization" evidence="1">
    <location>
        <begin position="381"/>
        <end position="417"/>
    </location>
</feature>
<feature type="compositionally biased region" description="Basic and acidic residues" evidence="3">
    <location>
        <begin position="103"/>
        <end position="112"/>
    </location>
</feature>
<feature type="active site" description="Proton donor" evidence="1">
    <location>
        <position position="247"/>
    </location>
</feature>
<feature type="binding site" evidence="1">
    <location>
        <position position="233"/>
    </location>
    <ligand>
        <name>coproporphyrinogen III</name>
        <dbReference type="ChEBI" id="CHEBI:57309"/>
    </ligand>
</feature>
<feature type="binding site" evidence="1">
    <location>
        <begin position="249"/>
        <end position="251"/>
    </location>
    <ligand>
        <name>coproporphyrinogen III</name>
        <dbReference type="ChEBI" id="CHEBI:57309"/>
    </ligand>
</feature>
<feature type="binding site" evidence="1">
    <location>
        <begin position="400"/>
        <end position="402"/>
    </location>
    <ligand>
        <name>coproporphyrinogen III</name>
        <dbReference type="ChEBI" id="CHEBI:57309"/>
    </ligand>
</feature>
<feature type="site" description="Important for dimerization" evidence="1">
    <location>
        <position position="316"/>
    </location>
</feature>
<feature type="modified residue" description="Phosphoserine" evidence="2">
    <location>
        <position position="101"/>
    </location>
</feature>
<feature type="modified residue" description="N6-acetyllysine; alternate" evidence="8">
    <location>
        <position position="393"/>
    </location>
</feature>
<feature type="modified residue" description="N6-succinyllysine; alternate" evidence="9">
    <location>
        <position position="393"/>
    </location>
</feature>
<feature type="sequence conflict" description="In Ref. 1; BAA03840." evidence="6" ref="1">
    <original>R</original>
    <variation>P</variation>
    <location>
        <position position="7"/>
    </location>
</feature>
<feature type="sequence conflict" description="In Ref. 5; AA sequence." evidence="6" ref="5">
    <original>S</original>
    <variation>T</variation>
    <location>
        <position position="101"/>
    </location>
</feature>
<feature type="sequence conflict" description="In Ref. 5; AA sequence." evidence="6" ref="5">
    <original>CS</original>
    <variation>SD</variation>
    <location>
        <begin position="116"/>
        <end position="117"/>
    </location>
</feature>
<feature type="sequence conflict" description="In Ref. 5; AA sequence." evidence="6" ref="5">
    <original>S</original>
    <variation>T</variation>
    <location>
        <position position="122"/>
    </location>
</feature>
<feature type="sequence conflict" description="In Ref. 5; AA sequence." evidence="6" ref="5">
    <original>V</original>
    <variation>P</variation>
    <location>
        <position position="124"/>
    </location>
</feature>
<feature type="sequence conflict" description="In Ref. 3; BAC79229." evidence="6" ref="3">
    <original>K</original>
    <variation>N</variation>
    <location>
        <position position="138"/>
    </location>
</feature>
<feature type="sequence conflict" description="In Ref. 1; BAA03840." evidence="6" ref="1">
    <original>T</original>
    <variation>R</variation>
    <location>
        <position position="275"/>
    </location>
</feature>
<organism>
    <name type="scientific">Mus musculus</name>
    <name type="common">Mouse</name>
    <dbReference type="NCBI Taxonomy" id="10090"/>
    <lineage>
        <taxon>Eukaryota</taxon>
        <taxon>Metazoa</taxon>
        <taxon>Chordata</taxon>
        <taxon>Craniata</taxon>
        <taxon>Vertebrata</taxon>
        <taxon>Euteleostomi</taxon>
        <taxon>Mammalia</taxon>
        <taxon>Eutheria</taxon>
        <taxon>Euarchontoglires</taxon>
        <taxon>Glires</taxon>
        <taxon>Rodentia</taxon>
        <taxon>Myomorpha</taxon>
        <taxon>Muroidea</taxon>
        <taxon>Muridae</taxon>
        <taxon>Murinae</taxon>
        <taxon>Mus</taxon>
        <taxon>Mus</taxon>
    </lineage>
</organism>
<accession>P36552</accession>
<accession>Q7TQ36</accession>
<accession>Q8VD08</accession>
<dbReference type="EC" id="1.3.3.3" evidence="7"/>
<dbReference type="EMBL" id="D16333">
    <property type="protein sequence ID" value="BAA03840.1"/>
    <property type="status" value="ALT_FRAME"/>
    <property type="molecule type" value="mRNA"/>
</dbReference>
<dbReference type="EMBL" id="BC017680">
    <property type="protein sequence ID" value="AAH17680.2"/>
    <property type="status" value="ALT_INIT"/>
    <property type="molecule type" value="mRNA"/>
</dbReference>
<dbReference type="EMBL" id="AY382578">
    <property type="protein sequence ID" value="AAQ88103.1"/>
    <property type="molecule type" value="Genomic_DNA"/>
</dbReference>
<dbReference type="EMBL" id="AB099924">
    <property type="protein sequence ID" value="BAC79229.1"/>
    <property type="molecule type" value="Genomic_DNA"/>
</dbReference>
<dbReference type="CCDS" id="CCDS49878.1"/>
<dbReference type="PIR" id="A48049">
    <property type="entry name" value="A48049"/>
</dbReference>
<dbReference type="RefSeq" id="NP_031783.2">
    <property type="nucleotide sequence ID" value="NM_007757.2"/>
</dbReference>
<dbReference type="SMR" id="P36552"/>
<dbReference type="BioGRID" id="198862">
    <property type="interactions" value="5"/>
</dbReference>
<dbReference type="FunCoup" id="P36552">
    <property type="interactions" value="2486"/>
</dbReference>
<dbReference type="IntAct" id="P36552">
    <property type="interactions" value="3"/>
</dbReference>
<dbReference type="STRING" id="10090.ENSMUSP00000055455"/>
<dbReference type="GlyGen" id="P36552">
    <property type="glycosylation" value="2 sites, 1 O-linked glycan (2 sites)"/>
</dbReference>
<dbReference type="iPTMnet" id="P36552"/>
<dbReference type="PhosphoSitePlus" id="P36552"/>
<dbReference type="SwissPalm" id="P36552"/>
<dbReference type="jPOST" id="P36552"/>
<dbReference type="PaxDb" id="10090-ENSMUSP00000055455"/>
<dbReference type="PeptideAtlas" id="P36552"/>
<dbReference type="ProteomicsDB" id="269589"/>
<dbReference type="Pumba" id="P36552"/>
<dbReference type="DNASU" id="12892"/>
<dbReference type="Ensembl" id="ENSMUST00000060077.7">
    <property type="protein sequence ID" value="ENSMUSP00000055455.6"/>
    <property type="gene ID" value="ENSMUSG00000022742.7"/>
</dbReference>
<dbReference type="GeneID" id="12892"/>
<dbReference type="KEGG" id="mmu:12892"/>
<dbReference type="UCSC" id="uc007znz.2">
    <property type="organism name" value="mouse"/>
</dbReference>
<dbReference type="AGR" id="MGI:104841"/>
<dbReference type="CTD" id="1371"/>
<dbReference type="MGI" id="MGI:104841">
    <property type="gene designation" value="Cpox"/>
</dbReference>
<dbReference type="VEuPathDB" id="HostDB:ENSMUSG00000022742"/>
<dbReference type="eggNOG" id="KOG1518">
    <property type="taxonomic scope" value="Eukaryota"/>
</dbReference>
<dbReference type="GeneTree" id="ENSGT00390000017311"/>
<dbReference type="HOGENOM" id="CLU_026169_1_0_1"/>
<dbReference type="InParanoid" id="P36552"/>
<dbReference type="OMA" id="VHANWRY"/>
<dbReference type="OrthoDB" id="15318at2759"/>
<dbReference type="PhylomeDB" id="P36552"/>
<dbReference type="TreeFam" id="TF300703"/>
<dbReference type="BRENDA" id="1.3.3.3">
    <property type="organism ID" value="3474"/>
</dbReference>
<dbReference type="Reactome" id="R-MMU-189451">
    <property type="pathway name" value="Heme biosynthesis"/>
</dbReference>
<dbReference type="UniPathway" id="UPA00251">
    <property type="reaction ID" value="UER00322"/>
</dbReference>
<dbReference type="BioGRID-ORCS" id="12892">
    <property type="hits" value="6 hits in 81 CRISPR screens"/>
</dbReference>
<dbReference type="ChiTaRS" id="Cpox">
    <property type="organism name" value="mouse"/>
</dbReference>
<dbReference type="PRO" id="PR:P36552"/>
<dbReference type="Proteomes" id="UP000000589">
    <property type="component" value="Chromosome 16"/>
</dbReference>
<dbReference type="RNAct" id="P36552">
    <property type="molecule type" value="protein"/>
</dbReference>
<dbReference type="Bgee" id="ENSMUSG00000022742">
    <property type="expression patterns" value="Expressed in late embryo and 258 other cell types or tissues"/>
</dbReference>
<dbReference type="GO" id="GO:0005829">
    <property type="term" value="C:cytosol"/>
    <property type="evidence" value="ECO:0007669"/>
    <property type="project" value="Ensembl"/>
</dbReference>
<dbReference type="GO" id="GO:0016020">
    <property type="term" value="C:membrane"/>
    <property type="evidence" value="ECO:0000315"/>
    <property type="project" value="ParkinsonsUK-UCL"/>
</dbReference>
<dbReference type="GO" id="GO:0005743">
    <property type="term" value="C:mitochondrial inner membrane"/>
    <property type="evidence" value="ECO:0007669"/>
    <property type="project" value="Ensembl"/>
</dbReference>
<dbReference type="GO" id="GO:0005758">
    <property type="term" value="C:mitochondrial intermembrane space"/>
    <property type="evidence" value="ECO:0000314"/>
    <property type="project" value="MGI"/>
</dbReference>
<dbReference type="GO" id="GO:0005739">
    <property type="term" value="C:mitochondrion"/>
    <property type="evidence" value="ECO:0000314"/>
    <property type="project" value="MGI"/>
</dbReference>
<dbReference type="GO" id="GO:0004109">
    <property type="term" value="F:coproporphyrinogen oxidase activity"/>
    <property type="evidence" value="ECO:0000314"/>
    <property type="project" value="MGI"/>
</dbReference>
<dbReference type="GO" id="GO:0005391">
    <property type="term" value="F:P-type sodium:potassium-exchanging transporter activity"/>
    <property type="evidence" value="ECO:0000304"/>
    <property type="project" value="MGI"/>
</dbReference>
<dbReference type="GO" id="GO:0042803">
    <property type="term" value="F:protein homodimerization activity"/>
    <property type="evidence" value="ECO:0000250"/>
    <property type="project" value="UniProtKB"/>
</dbReference>
<dbReference type="GO" id="GO:0005212">
    <property type="term" value="F:structural constituent of eye lens"/>
    <property type="evidence" value="ECO:0000315"/>
    <property type="project" value="MGI"/>
</dbReference>
<dbReference type="GO" id="GO:0006784">
    <property type="term" value="P:heme A biosynthetic process"/>
    <property type="evidence" value="ECO:0000314"/>
    <property type="project" value="MGI"/>
</dbReference>
<dbReference type="GO" id="GO:0006785">
    <property type="term" value="P:heme B biosynthetic process"/>
    <property type="evidence" value="ECO:0000314"/>
    <property type="project" value="MGI"/>
</dbReference>
<dbReference type="GO" id="GO:0006783">
    <property type="term" value="P:heme biosynthetic process"/>
    <property type="evidence" value="ECO:0000314"/>
    <property type="project" value="MGI"/>
</dbReference>
<dbReference type="GO" id="GO:0048034">
    <property type="term" value="P:heme O biosynthetic process"/>
    <property type="evidence" value="ECO:0000314"/>
    <property type="project" value="MGI"/>
</dbReference>
<dbReference type="GO" id="GO:0006813">
    <property type="term" value="P:potassium ion transport"/>
    <property type="evidence" value="ECO:0000304"/>
    <property type="project" value="MGI"/>
</dbReference>
<dbReference type="GO" id="GO:0006782">
    <property type="term" value="P:protoporphyrinogen IX biosynthetic process"/>
    <property type="evidence" value="ECO:0007669"/>
    <property type="project" value="UniProtKB-UniPathway"/>
</dbReference>
<dbReference type="GO" id="GO:0046685">
    <property type="term" value="P:response to arsenic-containing substance"/>
    <property type="evidence" value="ECO:0007669"/>
    <property type="project" value="Ensembl"/>
</dbReference>
<dbReference type="GO" id="GO:0017085">
    <property type="term" value="P:response to insecticide"/>
    <property type="evidence" value="ECO:0007669"/>
    <property type="project" value="Ensembl"/>
</dbReference>
<dbReference type="GO" id="GO:0010039">
    <property type="term" value="P:response to iron ion"/>
    <property type="evidence" value="ECO:0007669"/>
    <property type="project" value="Ensembl"/>
</dbReference>
<dbReference type="GO" id="GO:0010288">
    <property type="term" value="P:response to lead ion"/>
    <property type="evidence" value="ECO:0007669"/>
    <property type="project" value="Ensembl"/>
</dbReference>
<dbReference type="GO" id="GO:0051597">
    <property type="term" value="P:response to methylmercury"/>
    <property type="evidence" value="ECO:0007669"/>
    <property type="project" value="Ensembl"/>
</dbReference>
<dbReference type="GO" id="GO:0006814">
    <property type="term" value="P:sodium ion transport"/>
    <property type="evidence" value="ECO:0000304"/>
    <property type="project" value="MGI"/>
</dbReference>
<dbReference type="FunFam" id="3.40.1500.10:FF:000002">
    <property type="entry name" value="oxygen-dependent coproporphyrinogen-III oxidase, mitochondrial"/>
    <property type="match status" value="1"/>
</dbReference>
<dbReference type="Gene3D" id="3.40.1500.10">
    <property type="entry name" value="Coproporphyrinogen III oxidase, aerobic"/>
    <property type="match status" value="1"/>
</dbReference>
<dbReference type="InterPro" id="IPR001260">
    <property type="entry name" value="Coprogen_oxidase_aer"/>
</dbReference>
<dbReference type="InterPro" id="IPR036406">
    <property type="entry name" value="Coprogen_oxidase_aer_sf"/>
</dbReference>
<dbReference type="InterPro" id="IPR018375">
    <property type="entry name" value="Coprogen_oxidase_CS"/>
</dbReference>
<dbReference type="NCBIfam" id="NF003727">
    <property type="entry name" value="PRK05330.1"/>
    <property type="match status" value="1"/>
</dbReference>
<dbReference type="PANTHER" id="PTHR10755">
    <property type="entry name" value="COPROPORPHYRINOGEN III OXIDASE, MITOCHONDRIAL"/>
    <property type="match status" value="1"/>
</dbReference>
<dbReference type="PANTHER" id="PTHR10755:SF0">
    <property type="entry name" value="OXYGEN-DEPENDENT COPROPORPHYRINOGEN-III OXIDASE, MITOCHONDRIAL"/>
    <property type="match status" value="1"/>
</dbReference>
<dbReference type="Pfam" id="PF01218">
    <property type="entry name" value="Coprogen_oxidas"/>
    <property type="match status" value="1"/>
</dbReference>
<dbReference type="PRINTS" id="PR00073">
    <property type="entry name" value="COPRGNOXDASE"/>
</dbReference>
<dbReference type="SUPFAM" id="SSF102886">
    <property type="entry name" value="Coproporphyrinogen III oxidase"/>
    <property type="match status" value="1"/>
</dbReference>
<dbReference type="PROSITE" id="PS01021">
    <property type="entry name" value="COPROGEN_OXIDASE"/>
    <property type="match status" value="1"/>
</dbReference>
<evidence type="ECO:0000250" key="1">
    <source>
        <dbReference type="UniProtKB" id="P36551"/>
    </source>
</evidence>
<evidence type="ECO:0000250" key="2">
    <source>
        <dbReference type="UniProtKB" id="Q3B7D0"/>
    </source>
</evidence>
<evidence type="ECO:0000256" key="3">
    <source>
        <dbReference type="SAM" id="MobiDB-lite"/>
    </source>
</evidence>
<evidence type="ECO:0000269" key="4">
    <source>
    </source>
</evidence>
<evidence type="ECO:0000269" key="5">
    <source>
    </source>
</evidence>
<evidence type="ECO:0000305" key="6"/>
<evidence type="ECO:0000305" key="7">
    <source>
    </source>
</evidence>
<evidence type="ECO:0007744" key="8">
    <source>
    </source>
</evidence>
<evidence type="ECO:0007744" key="9">
    <source>
    </source>
</evidence>
<sequence length="443" mass="49715">MALRLGRLGSDPWWRAVLGDYAQLRAASPRCASARVCQLPGTAGPQPRRGLGYGPWARGGSGLGTRLAATLAGLAGLAAAAFGHVQRAEMVPKSSGARSPSPGRREEDGDELARRCSTFMSSPVTELRELRRRPEDMKTKMELMIMETQAQVCRALAQVDGVADFTVDRWERKEGGGGITCVLQDGRVFEKAGVSISVVHGNLSEEAANQMRGRGKTLKTKDSKLPFTAMGVSSVIHPKNPYAPTMHFNYRYFEVEEADGNTHWWFGGGCDLTPTYLNQEDAVHFHRTLKEACDQHGPDIYPKFKKWCDDYFFIVHRGERRGIGGIFFDDLDSPSKEEAFRFVKTCAEAVVPSYVPIVKKHCDDSYTPRDKLWQQLRRGRYVEFNLLYDRGTKFGLFTPGSRIESILMSLPLTARWEYMHSPPENSKEAEILEVLRHPKDWVH</sequence>
<comment type="function">
    <text evidence="1">Involved in the heme biosynthesis. Catalyzes the aerobic oxidative decarboxylation of propionate groups of rings A and B of coproporphyrinogen-III to yield the vinyl groups in protoporphyrinogen-IX (By similarity).</text>
</comment>
<comment type="catalytic activity">
    <reaction evidence="7">
        <text>coproporphyrinogen III + O2 + 2 H(+) = protoporphyrinogen IX + 2 CO2 + 2 H2O</text>
        <dbReference type="Rhea" id="RHEA:18257"/>
        <dbReference type="ChEBI" id="CHEBI:15377"/>
        <dbReference type="ChEBI" id="CHEBI:15378"/>
        <dbReference type="ChEBI" id="CHEBI:15379"/>
        <dbReference type="ChEBI" id="CHEBI:16526"/>
        <dbReference type="ChEBI" id="CHEBI:57307"/>
        <dbReference type="ChEBI" id="CHEBI:57309"/>
        <dbReference type="EC" id="1.3.3.3"/>
    </reaction>
    <physiologicalReaction direction="left-to-right" evidence="7">
        <dbReference type="Rhea" id="RHEA:18258"/>
    </physiologicalReaction>
</comment>
<comment type="pathway">
    <text evidence="7">Porphyrin-containing compound metabolism; protoporphyrin-IX biosynthesis; protoporphyrinogen-IX from coproporphyrinogen-III (O2 route): step 1/1.</text>
</comment>
<comment type="subunit">
    <text evidence="1">Homodimer.</text>
</comment>
<comment type="subcellular location">
    <subcellularLocation>
        <location evidence="5">Mitochondrion intermembrane space</location>
    </subcellularLocation>
</comment>
<comment type="tissue specificity">
    <text evidence="5">Expressed in erythroid cells. Expressed in liver (PubMed:8407975).</text>
</comment>
<comment type="similarity">
    <text evidence="6">Belongs to the aerobic coproporphyrinogen-III oxidase family.</text>
</comment>
<comment type="sequence caution" evidence="6">
    <conflict type="erroneous initiation">
        <sequence resource="EMBL-CDS" id="AAH17680"/>
    </conflict>
    <text>Truncated N-terminus.</text>
</comment>
<comment type="sequence caution" evidence="6">
    <conflict type="frameshift">
        <sequence resource="EMBL-CDS" id="BAA03840"/>
    </conflict>
</comment>
<keyword id="KW-0007">Acetylation</keyword>
<keyword id="KW-0903">Direct protein sequencing</keyword>
<keyword id="KW-0350">Heme biosynthesis</keyword>
<keyword id="KW-0496">Mitochondrion</keyword>
<keyword id="KW-0560">Oxidoreductase</keyword>
<keyword id="KW-0597">Phosphoprotein</keyword>
<keyword id="KW-0627">Porphyrin biosynthesis</keyword>
<keyword id="KW-1185">Reference proteome</keyword>
<keyword id="KW-0809">Transit peptide</keyword>